<comment type="function">
    <text>Cytochrome c2 is found mainly in purple, non-sulfur, photosynthetic bacteria where it functions as the electron donor to the oxidized bacteriochlorophyll in the photophosphorylation pathway. However, it may also have a role in the respiratory chain and is found in some non-photosynthetic bacteria.</text>
</comment>
<comment type="PTM">
    <text evidence="1">Binds 1 heme c group covalently per subunit.</text>
</comment>
<comment type="similarity">
    <text evidence="3">Belongs to the cytochrome c family.</text>
</comment>
<evidence type="ECO:0000250" key="1"/>
<evidence type="ECO:0000255" key="2">
    <source>
        <dbReference type="PROSITE-ProRule" id="PRU00433"/>
    </source>
</evidence>
<evidence type="ECO:0000305" key="3"/>
<dbReference type="PIR" id="A00079">
    <property type="entry name" value="CCQF2M"/>
</dbReference>
<dbReference type="SMR" id="P00087"/>
<dbReference type="GO" id="GO:0009055">
    <property type="term" value="F:electron transfer activity"/>
    <property type="evidence" value="ECO:0007669"/>
    <property type="project" value="InterPro"/>
</dbReference>
<dbReference type="GO" id="GO:0020037">
    <property type="term" value="F:heme binding"/>
    <property type="evidence" value="ECO:0007669"/>
    <property type="project" value="InterPro"/>
</dbReference>
<dbReference type="GO" id="GO:0046872">
    <property type="term" value="F:metal ion binding"/>
    <property type="evidence" value="ECO:0007669"/>
    <property type="project" value="UniProtKB-KW"/>
</dbReference>
<dbReference type="GO" id="GO:0015979">
    <property type="term" value="P:photosynthesis"/>
    <property type="evidence" value="ECO:0007669"/>
    <property type="project" value="UniProtKB-KW"/>
</dbReference>
<dbReference type="Gene3D" id="1.10.760.10">
    <property type="entry name" value="Cytochrome c-like domain"/>
    <property type="match status" value="1"/>
</dbReference>
<dbReference type="InterPro" id="IPR009056">
    <property type="entry name" value="Cyt_c-like_dom"/>
</dbReference>
<dbReference type="InterPro" id="IPR036909">
    <property type="entry name" value="Cyt_c-like_dom_sf"/>
</dbReference>
<dbReference type="InterPro" id="IPR002327">
    <property type="entry name" value="Cyt_c_1A/1B"/>
</dbReference>
<dbReference type="PANTHER" id="PTHR11961">
    <property type="entry name" value="CYTOCHROME C"/>
    <property type="match status" value="1"/>
</dbReference>
<dbReference type="Pfam" id="PF00034">
    <property type="entry name" value="Cytochrom_C"/>
    <property type="match status" value="1"/>
</dbReference>
<dbReference type="PRINTS" id="PR00604">
    <property type="entry name" value="CYTCHRMECIAB"/>
</dbReference>
<dbReference type="SUPFAM" id="SSF46626">
    <property type="entry name" value="Cytochrome c"/>
    <property type="match status" value="1"/>
</dbReference>
<dbReference type="PROSITE" id="PS51007">
    <property type="entry name" value="CYTC"/>
    <property type="match status" value="1"/>
</dbReference>
<accession>P00087</accession>
<reference key="1">
    <citation type="journal article" date="1979" name="Nature">
        <title>Cytochrome c2 sequence variation among the recognised species of purple nonsulphur photosynthetic bacteria.</title>
        <authorList>
            <person name="Ambler R.P."/>
            <person name="Daniel M."/>
            <person name="Hermoso J."/>
            <person name="Meyer T.E."/>
            <person name="Bartsch R.G."/>
            <person name="Kamen M.D."/>
        </authorList>
    </citation>
    <scope>PROTEIN SEQUENCE</scope>
    <source>
        <strain>ATCC 14031 / DSM 120 / KCTC 15609 / LMG 4354 / NCIMB 9957 / NTHC 131 / S</strain>
    </source>
</reference>
<reference key="2">
    <citation type="submission" date="1977-06" db="PIR data bank">
        <authorList>
            <person name="Ambler R.P."/>
        </authorList>
    </citation>
    <scope>PROTEIN SEQUENCE</scope>
</reference>
<proteinExistence type="evidence at protein level"/>
<feature type="chain" id="PRO_0000108351" description="Cytochrome c2 iso-1">
    <location>
        <begin position="1"/>
        <end position="100"/>
    </location>
</feature>
<feature type="binding site" description="covalent" evidence="2">
    <location>
        <position position="11"/>
    </location>
    <ligand>
        <name>heme c</name>
        <dbReference type="ChEBI" id="CHEBI:61717"/>
    </ligand>
</feature>
<feature type="binding site" description="covalent" evidence="2">
    <location>
        <position position="14"/>
    </location>
    <ligand>
        <name>heme c</name>
        <dbReference type="ChEBI" id="CHEBI:61717"/>
    </ligand>
</feature>
<feature type="binding site" description="axial binding residue" evidence="2">
    <location>
        <position position="15"/>
    </location>
    <ligand>
        <name>heme c</name>
        <dbReference type="ChEBI" id="CHEBI:61717"/>
    </ligand>
    <ligandPart>
        <name>Fe</name>
        <dbReference type="ChEBI" id="CHEBI:18248"/>
    </ligandPart>
</feature>
<feature type="binding site" description="axial binding residue" evidence="2">
    <location>
        <position position="76"/>
    </location>
    <ligand>
        <name>heme c</name>
        <dbReference type="ChEBI" id="CHEBI:61717"/>
    </ligand>
    <ligandPart>
        <name>Fe</name>
        <dbReference type="ChEBI" id="CHEBI:18248"/>
    </ligandPart>
</feature>
<name>CYC21_MAGML</name>
<protein>
    <recommendedName>
        <fullName>Cytochrome c2 iso-1</fullName>
    </recommendedName>
</protein>
<organism>
    <name type="scientific">Magnetospirillum molischianum</name>
    <name type="common">Rhodospirillum molischianum</name>
    <dbReference type="NCBI Taxonomy" id="1083"/>
    <lineage>
        <taxon>Bacteria</taxon>
        <taxon>Pseudomonadati</taxon>
        <taxon>Pseudomonadota</taxon>
        <taxon>Alphaproteobacteria</taxon>
        <taxon>Rhodospirillales</taxon>
        <taxon>Rhodospirillaceae</taxon>
        <taxon>Magnetospirillum</taxon>
    </lineage>
</organism>
<keyword id="KW-0903">Direct protein sequencing</keyword>
<keyword id="KW-0249">Electron transport</keyword>
<keyword id="KW-0349">Heme</keyword>
<keyword id="KW-0408">Iron</keyword>
<keyword id="KW-0479">Metal-binding</keyword>
<keyword id="KW-0602">Photosynthesis</keyword>
<keyword id="KW-0813">Transport</keyword>
<sequence length="100" mass="10248">ADAPPPAFNQCKACHSIDAGKNGVGPSLSGAYGRKVGLAPNYKYSPAHLASGMTIDDAMLTKYLANPKETIPGNKMGAAFGGLKNPADVAAVIAYLKTVK</sequence>